<protein>
    <recommendedName>
        <fullName evidence="5">Bublin coiled-coil protein</fullName>
    </recommendedName>
    <alternativeName>
        <fullName>UPF0184 protein C9orf16</fullName>
    </alternativeName>
</protein>
<keyword id="KW-0965">Cell junction</keyword>
<keyword id="KW-0175">Coiled coil</keyword>
<keyword id="KW-0963">Cytoplasm</keyword>
<keyword id="KW-0206">Cytoskeleton</keyword>
<keyword id="KW-0597">Phosphoprotein</keyword>
<keyword id="KW-1267">Proteomics identification</keyword>
<keyword id="KW-1185">Reference proteome</keyword>
<organism>
    <name type="scientific">Homo sapiens</name>
    <name type="common">Human</name>
    <dbReference type="NCBI Taxonomy" id="9606"/>
    <lineage>
        <taxon>Eukaryota</taxon>
        <taxon>Metazoa</taxon>
        <taxon>Chordata</taxon>
        <taxon>Craniata</taxon>
        <taxon>Vertebrata</taxon>
        <taxon>Euteleostomi</taxon>
        <taxon>Mammalia</taxon>
        <taxon>Eutheria</taxon>
        <taxon>Euarchontoglires</taxon>
        <taxon>Primates</taxon>
        <taxon>Haplorrhini</taxon>
        <taxon>Catarrhini</taxon>
        <taxon>Hominidae</taxon>
        <taxon>Homo</taxon>
    </lineage>
</organism>
<reference key="1">
    <citation type="journal article" date="2004" name="Nat. Genet.">
        <title>Complete sequencing and characterization of 21,243 full-length human cDNAs.</title>
        <authorList>
            <person name="Ota T."/>
            <person name="Suzuki Y."/>
            <person name="Nishikawa T."/>
            <person name="Otsuki T."/>
            <person name="Sugiyama T."/>
            <person name="Irie R."/>
            <person name="Wakamatsu A."/>
            <person name="Hayashi K."/>
            <person name="Sato H."/>
            <person name="Nagai K."/>
            <person name="Kimura K."/>
            <person name="Makita H."/>
            <person name="Sekine M."/>
            <person name="Obayashi M."/>
            <person name="Nishi T."/>
            <person name="Shibahara T."/>
            <person name="Tanaka T."/>
            <person name="Ishii S."/>
            <person name="Yamamoto J."/>
            <person name="Saito K."/>
            <person name="Kawai Y."/>
            <person name="Isono Y."/>
            <person name="Nakamura Y."/>
            <person name="Nagahari K."/>
            <person name="Murakami K."/>
            <person name="Yasuda T."/>
            <person name="Iwayanagi T."/>
            <person name="Wagatsuma M."/>
            <person name="Shiratori A."/>
            <person name="Sudo H."/>
            <person name="Hosoiri T."/>
            <person name="Kaku Y."/>
            <person name="Kodaira H."/>
            <person name="Kondo H."/>
            <person name="Sugawara M."/>
            <person name="Takahashi M."/>
            <person name="Kanda K."/>
            <person name="Yokoi T."/>
            <person name="Furuya T."/>
            <person name="Kikkawa E."/>
            <person name="Omura Y."/>
            <person name="Abe K."/>
            <person name="Kamihara K."/>
            <person name="Katsuta N."/>
            <person name="Sato K."/>
            <person name="Tanikawa M."/>
            <person name="Yamazaki M."/>
            <person name="Ninomiya K."/>
            <person name="Ishibashi T."/>
            <person name="Yamashita H."/>
            <person name="Murakawa K."/>
            <person name="Fujimori K."/>
            <person name="Tanai H."/>
            <person name="Kimata M."/>
            <person name="Watanabe M."/>
            <person name="Hiraoka S."/>
            <person name="Chiba Y."/>
            <person name="Ishida S."/>
            <person name="Ono Y."/>
            <person name="Takiguchi S."/>
            <person name="Watanabe S."/>
            <person name="Yosida M."/>
            <person name="Hotuta T."/>
            <person name="Kusano J."/>
            <person name="Kanehori K."/>
            <person name="Takahashi-Fujii A."/>
            <person name="Hara H."/>
            <person name="Tanase T.-O."/>
            <person name="Nomura Y."/>
            <person name="Togiya S."/>
            <person name="Komai F."/>
            <person name="Hara R."/>
            <person name="Takeuchi K."/>
            <person name="Arita M."/>
            <person name="Imose N."/>
            <person name="Musashino K."/>
            <person name="Yuuki H."/>
            <person name="Oshima A."/>
            <person name="Sasaki N."/>
            <person name="Aotsuka S."/>
            <person name="Yoshikawa Y."/>
            <person name="Matsunawa H."/>
            <person name="Ichihara T."/>
            <person name="Shiohata N."/>
            <person name="Sano S."/>
            <person name="Moriya S."/>
            <person name="Momiyama H."/>
            <person name="Satoh N."/>
            <person name="Takami S."/>
            <person name="Terashima Y."/>
            <person name="Suzuki O."/>
            <person name="Nakagawa S."/>
            <person name="Senoh A."/>
            <person name="Mizoguchi H."/>
            <person name="Goto Y."/>
            <person name="Shimizu F."/>
            <person name="Wakebe H."/>
            <person name="Hishigaki H."/>
            <person name="Watanabe T."/>
            <person name="Sugiyama A."/>
            <person name="Takemoto M."/>
            <person name="Kawakami B."/>
            <person name="Yamazaki M."/>
            <person name="Watanabe K."/>
            <person name="Kumagai A."/>
            <person name="Itakura S."/>
            <person name="Fukuzumi Y."/>
            <person name="Fujimori Y."/>
            <person name="Komiyama M."/>
            <person name="Tashiro H."/>
            <person name="Tanigami A."/>
            <person name="Fujiwara T."/>
            <person name="Ono T."/>
            <person name="Yamada K."/>
            <person name="Fujii Y."/>
            <person name="Ozaki K."/>
            <person name="Hirao M."/>
            <person name="Ohmori Y."/>
            <person name="Kawabata A."/>
            <person name="Hikiji T."/>
            <person name="Kobatake N."/>
            <person name="Inagaki H."/>
            <person name="Ikema Y."/>
            <person name="Okamoto S."/>
            <person name="Okitani R."/>
            <person name="Kawakami T."/>
            <person name="Noguchi S."/>
            <person name="Itoh T."/>
            <person name="Shigeta K."/>
            <person name="Senba T."/>
            <person name="Matsumura K."/>
            <person name="Nakajima Y."/>
            <person name="Mizuno T."/>
            <person name="Morinaga M."/>
            <person name="Sasaki M."/>
            <person name="Togashi T."/>
            <person name="Oyama M."/>
            <person name="Hata H."/>
            <person name="Watanabe M."/>
            <person name="Komatsu T."/>
            <person name="Mizushima-Sugano J."/>
            <person name="Satoh T."/>
            <person name="Shirai Y."/>
            <person name="Takahashi Y."/>
            <person name="Nakagawa K."/>
            <person name="Okumura K."/>
            <person name="Nagase T."/>
            <person name="Nomura N."/>
            <person name="Kikuchi H."/>
            <person name="Masuho Y."/>
            <person name="Yamashita R."/>
            <person name="Nakai K."/>
            <person name="Yada T."/>
            <person name="Nakamura Y."/>
            <person name="Ohara O."/>
            <person name="Isogai T."/>
            <person name="Sugano S."/>
        </authorList>
    </citation>
    <scope>NUCLEOTIDE SEQUENCE [LARGE SCALE MRNA]</scope>
    <source>
        <tissue>Thymus</tissue>
    </source>
</reference>
<reference key="2">
    <citation type="journal article" date="2004" name="Nature">
        <title>DNA sequence and analysis of human chromosome 9.</title>
        <authorList>
            <person name="Humphray S.J."/>
            <person name="Oliver K."/>
            <person name="Hunt A.R."/>
            <person name="Plumb R.W."/>
            <person name="Loveland J.E."/>
            <person name="Howe K.L."/>
            <person name="Andrews T.D."/>
            <person name="Searle S."/>
            <person name="Hunt S.E."/>
            <person name="Scott C.E."/>
            <person name="Jones M.C."/>
            <person name="Ainscough R."/>
            <person name="Almeida J.P."/>
            <person name="Ambrose K.D."/>
            <person name="Ashwell R.I.S."/>
            <person name="Babbage A.K."/>
            <person name="Babbage S."/>
            <person name="Bagguley C.L."/>
            <person name="Bailey J."/>
            <person name="Banerjee R."/>
            <person name="Barker D.J."/>
            <person name="Barlow K.F."/>
            <person name="Bates K."/>
            <person name="Beasley H."/>
            <person name="Beasley O."/>
            <person name="Bird C.P."/>
            <person name="Bray-Allen S."/>
            <person name="Brown A.J."/>
            <person name="Brown J.Y."/>
            <person name="Burford D."/>
            <person name="Burrill W."/>
            <person name="Burton J."/>
            <person name="Carder C."/>
            <person name="Carter N.P."/>
            <person name="Chapman J.C."/>
            <person name="Chen Y."/>
            <person name="Clarke G."/>
            <person name="Clark S.Y."/>
            <person name="Clee C.M."/>
            <person name="Clegg S."/>
            <person name="Collier R.E."/>
            <person name="Corby N."/>
            <person name="Crosier M."/>
            <person name="Cummings A.T."/>
            <person name="Davies J."/>
            <person name="Dhami P."/>
            <person name="Dunn M."/>
            <person name="Dutta I."/>
            <person name="Dyer L.W."/>
            <person name="Earthrowl M.E."/>
            <person name="Faulkner L."/>
            <person name="Fleming C.J."/>
            <person name="Frankish A."/>
            <person name="Frankland J.A."/>
            <person name="French L."/>
            <person name="Fricker D.G."/>
            <person name="Garner P."/>
            <person name="Garnett J."/>
            <person name="Ghori J."/>
            <person name="Gilbert J.G.R."/>
            <person name="Glison C."/>
            <person name="Grafham D.V."/>
            <person name="Gribble S."/>
            <person name="Griffiths C."/>
            <person name="Griffiths-Jones S."/>
            <person name="Grocock R."/>
            <person name="Guy J."/>
            <person name="Hall R.E."/>
            <person name="Hammond S."/>
            <person name="Harley J.L."/>
            <person name="Harrison E.S.I."/>
            <person name="Hart E.A."/>
            <person name="Heath P.D."/>
            <person name="Henderson C.D."/>
            <person name="Hopkins B.L."/>
            <person name="Howard P.J."/>
            <person name="Howden P.J."/>
            <person name="Huckle E."/>
            <person name="Johnson C."/>
            <person name="Johnson D."/>
            <person name="Joy A.A."/>
            <person name="Kay M."/>
            <person name="Keenan S."/>
            <person name="Kershaw J.K."/>
            <person name="Kimberley A.M."/>
            <person name="King A."/>
            <person name="Knights A."/>
            <person name="Laird G.K."/>
            <person name="Langford C."/>
            <person name="Lawlor S."/>
            <person name="Leongamornlert D.A."/>
            <person name="Leversha M."/>
            <person name="Lloyd C."/>
            <person name="Lloyd D.M."/>
            <person name="Lovell J."/>
            <person name="Martin S."/>
            <person name="Mashreghi-Mohammadi M."/>
            <person name="Matthews L."/>
            <person name="McLaren S."/>
            <person name="McLay K.E."/>
            <person name="McMurray A."/>
            <person name="Milne S."/>
            <person name="Nickerson T."/>
            <person name="Nisbett J."/>
            <person name="Nordsiek G."/>
            <person name="Pearce A.V."/>
            <person name="Peck A.I."/>
            <person name="Porter K.M."/>
            <person name="Pandian R."/>
            <person name="Pelan S."/>
            <person name="Phillimore B."/>
            <person name="Povey S."/>
            <person name="Ramsey Y."/>
            <person name="Rand V."/>
            <person name="Scharfe M."/>
            <person name="Sehra H.K."/>
            <person name="Shownkeen R."/>
            <person name="Sims S.K."/>
            <person name="Skuce C.D."/>
            <person name="Smith M."/>
            <person name="Steward C.A."/>
            <person name="Swarbreck D."/>
            <person name="Sycamore N."/>
            <person name="Tester J."/>
            <person name="Thorpe A."/>
            <person name="Tracey A."/>
            <person name="Tromans A."/>
            <person name="Thomas D.W."/>
            <person name="Wall M."/>
            <person name="Wallis J.M."/>
            <person name="West A.P."/>
            <person name="Whitehead S.L."/>
            <person name="Willey D.L."/>
            <person name="Williams S.A."/>
            <person name="Wilming L."/>
            <person name="Wray P.W."/>
            <person name="Young L."/>
            <person name="Ashurst J.L."/>
            <person name="Coulson A."/>
            <person name="Blocker H."/>
            <person name="Durbin R.M."/>
            <person name="Sulston J.E."/>
            <person name="Hubbard T."/>
            <person name="Jackson M.J."/>
            <person name="Bentley D.R."/>
            <person name="Beck S."/>
            <person name="Rogers J."/>
            <person name="Dunham I."/>
        </authorList>
    </citation>
    <scope>NUCLEOTIDE SEQUENCE [LARGE SCALE GENOMIC DNA]</scope>
</reference>
<reference key="3">
    <citation type="submission" date="2005-07" db="EMBL/GenBank/DDBJ databases">
        <authorList>
            <person name="Mural R.J."/>
            <person name="Istrail S."/>
            <person name="Sutton G.G."/>
            <person name="Florea L."/>
            <person name="Halpern A.L."/>
            <person name="Mobarry C.M."/>
            <person name="Lippert R."/>
            <person name="Walenz B."/>
            <person name="Shatkay H."/>
            <person name="Dew I."/>
            <person name="Miller J.R."/>
            <person name="Flanigan M.J."/>
            <person name="Edwards N.J."/>
            <person name="Bolanos R."/>
            <person name="Fasulo D."/>
            <person name="Halldorsson B.V."/>
            <person name="Hannenhalli S."/>
            <person name="Turner R."/>
            <person name="Yooseph S."/>
            <person name="Lu F."/>
            <person name="Nusskern D.R."/>
            <person name="Shue B.C."/>
            <person name="Zheng X.H."/>
            <person name="Zhong F."/>
            <person name="Delcher A.L."/>
            <person name="Huson D.H."/>
            <person name="Kravitz S.A."/>
            <person name="Mouchard L."/>
            <person name="Reinert K."/>
            <person name="Remington K.A."/>
            <person name="Clark A.G."/>
            <person name="Waterman M.S."/>
            <person name="Eichler E.E."/>
            <person name="Adams M.D."/>
            <person name="Hunkapiller M.W."/>
            <person name="Myers E.W."/>
            <person name="Venter J.C."/>
        </authorList>
    </citation>
    <scope>NUCLEOTIDE SEQUENCE [LARGE SCALE GENOMIC DNA]</scope>
</reference>
<reference key="4">
    <citation type="journal article" date="2004" name="Genome Res.">
        <title>The status, quality, and expansion of the NIH full-length cDNA project: the Mammalian Gene Collection (MGC).</title>
        <authorList>
            <consortium name="The MGC Project Team"/>
        </authorList>
    </citation>
    <scope>NUCLEOTIDE SEQUENCE [LARGE SCALE MRNA]</scope>
    <source>
        <tissue>Muscle</tissue>
    </source>
</reference>
<reference key="5">
    <citation type="journal article" date="1999" name="Hum. Mol. Genet.">
        <title>Extensive gene order differences within regions of conserved synteny between the Fugu and human genomes: implications for chromosomal evolution and the cloning of disease genes.</title>
        <authorList>
            <person name="Gilley J."/>
            <person name="Fried M."/>
        </authorList>
    </citation>
    <scope>NUCLEOTIDE SEQUENCE [GENOMIC DNA] OF 27-83</scope>
</reference>
<reference key="6">
    <citation type="journal article" date="2006" name="Nat. Biotechnol.">
        <title>A probability-based approach for high-throughput protein phosphorylation analysis and site localization.</title>
        <authorList>
            <person name="Beausoleil S.A."/>
            <person name="Villen J."/>
            <person name="Gerber S.A."/>
            <person name="Rush J."/>
            <person name="Gygi S.P."/>
        </authorList>
    </citation>
    <scope>PHOSPHORYLATION [LARGE SCALE ANALYSIS] AT SER-82</scope>
    <scope>IDENTIFICATION BY MASS SPECTROMETRY [LARGE SCALE ANALYSIS]</scope>
    <source>
        <tissue>Cervix carcinoma</tissue>
    </source>
</reference>
<reference key="7">
    <citation type="journal article" date="2008" name="Proc. Natl. Acad. Sci. U.S.A.">
        <title>A quantitative atlas of mitotic phosphorylation.</title>
        <authorList>
            <person name="Dephoure N."/>
            <person name="Zhou C."/>
            <person name="Villen J."/>
            <person name="Beausoleil S.A."/>
            <person name="Bakalarski C.E."/>
            <person name="Elledge S.J."/>
            <person name="Gygi S.P."/>
        </authorList>
    </citation>
    <scope>PHOSPHORYLATION [LARGE SCALE ANALYSIS] AT SER-82</scope>
    <scope>IDENTIFICATION BY MASS SPECTROMETRY [LARGE SCALE ANALYSIS]</scope>
    <source>
        <tissue>Cervix carcinoma</tissue>
    </source>
</reference>
<reference key="8">
    <citation type="journal article" date="2009" name="Anal. Chem.">
        <title>Lys-N and trypsin cover complementary parts of the phosphoproteome in a refined SCX-based approach.</title>
        <authorList>
            <person name="Gauci S."/>
            <person name="Helbig A.O."/>
            <person name="Slijper M."/>
            <person name="Krijgsveld J."/>
            <person name="Heck A.J."/>
            <person name="Mohammed S."/>
        </authorList>
    </citation>
    <scope>IDENTIFICATION BY MASS SPECTROMETRY [LARGE SCALE ANALYSIS]</scope>
</reference>
<reference key="9">
    <citation type="journal article" date="2009" name="Sci. Signal.">
        <title>Quantitative phosphoproteomic analysis of T cell receptor signaling reveals system-wide modulation of protein-protein interactions.</title>
        <authorList>
            <person name="Mayya V."/>
            <person name="Lundgren D.H."/>
            <person name="Hwang S.-I."/>
            <person name="Rezaul K."/>
            <person name="Wu L."/>
            <person name="Eng J.K."/>
            <person name="Rodionov V."/>
            <person name="Han D.K."/>
        </authorList>
    </citation>
    <scope>PHOSPHORYLATION [LARGE SCALE ANALYSIS] AT SER-82</scope>
    <scope>IDENTIFICATION BY MASS SPECTROMETRY [LARGE SCALE ANALYSIS]</scope>
    <source>
        <tissue>Leukemic T-cell</tissue>
    </source>
</reference>
<reference key="10">
    <citation type="journal article" date="2010" name="Sci. Signal.">
        <title>Quantitative phosphoproteomics reveals widespread full phosphorylation site occupancy during mitosis.</title>
        <authorList>
            <person name="Olsen J.V."/>
            <person name="Vermeulen M."/>
            <person name="Santamaria A."/>
            <person name="Kumar C."/>
            <person name="Miller M.L."/>
            <person name="Jensen L.J."/>
            <person name="Gnad F."/>
            <person name="Cox J."/>
            <person name="Jensen T.S."/>
            <person name="Nigg E.A."/>
            <person name="Brunak S."/>
            <person name="Mann M."/>
        </authorList>
    </citation>
    <scope>PHOSPHORYLATION [LARGE SCALE ANALYSIS] AT SER-82</scope>
    <scope>IDENTIFICATION BY MASS SPECTROMETRY [LARGE SCALE ANALYSIS]</scope>
    <source>
        <tissue>Cervix carcinoma</tissue>
    </source>
</reference>
<reference key="11">
    <citation type="journal article" date="2011" name="Sci. Signal.">
        <title>System-wide temporal characterization of the proteome and phosphoproteome of human embryonic stem cell differentiation.</title>
        <authorList>
            <person name="Rigbolt K.T."/>
            <person name="Prokhorova T.A."/>
            <person name="Akimov V."/>
            <person name="Henningsen J."/>
            <person name="Johansen P.T."/>
            <person name="Kratchmarova I."/>
            <person name="Kassem M."/>
            <person name="Mann M."/>
            <person name="Olsen J.V."/>
            <person name="Blagoev B."/>
        </authorList>
    </citation>
    <scope>PHOSPHORYLATION [LARGE SCALE ANALYSIS] AT SER-82</scope>
    <scope>IDENTIFICATION BY MASS SPECTROMETRY [LARGE SCALE ANALYSIS]</scope>
</reference>
<reference key="12">
    <citation type="journal article" date="2021" name="Curr. Biol.">
        <title>BBLN-1 is essential for intermediate filament organization and apical membrane morphology.</title>
        <authorList>
            <person name="Remmelzwaal S."/>
            <person name="Geisler F."/>
            <person name="Stucchi R."/>
            <person name="van der Horst S."/>
            <person name="Pasolli M."/>
            <person name="Kroll J.R."/>
            <person name="Jarosinska O.D."/>
            <person name="Akhmanova A."/>
            <person name="Richardson C.A."/>
            <person name="Altelaar M."/>
            <person name="Leube R.E."/>
            <person name="Ramalho J.J."/>
            <person name="Boxem M."/>
        </authorList>
    </citation>
    <scope>FUNCTION</scope>
    <scope>SUBCELLULAR LOCATION</scope>
</reference>
<feature type="chain" id="PRO_0000195161" description="Bublin coiled-coil protein">
    <location>
        <begin position="1"/>
        <end position="83"/>
    </location>
</feature>
<feature type="region of interest" description="Disordered" evidence="2">
    <location>
        <begin position="1"/>
        <end position="24"/>
    </location>
</feature>
<feature type="coiled-coil region" evidence="1">
    <location>
        <begin position="25"/>
        <end position="74"/>
    </location>
</feature>
<feature type="modified residue" description="Phosphoserine" evidence="6 7 8 9 10">
    <location>
        <position position="82"/>
    </location>
</feature>
<feature type="sequence conflict" description="In Ref. 5; CAB44344." evidence="4" ref="5">
    <original>L</original>
    <variation>V</variation>
    <location>
        <position position="35"/>
    </location>
</feature>
<sequence>MSGPNGDLGMPVEAGAEGEEDGFGEAEYAAINSMLDQINSCLDHLEEKNDHLHARLQELLESNRQTRLEFQQQLGEAPSDASP</sequence>
<accession>Q9BUW7</accession>
<accession>Q5SYV8</accession>
<accession>Q9Y3F7</accession>
<name>BBLN_HUMAN</name>
<proteinExistence type="evidence at protein level"/>
<dbReference type="EMBL" id="AK315753">
    <property type="protein sequence ID" value="BAG38107.1"/>
    <property type="molecule type" value="mRNA"/>
</dbReference>
<dbReference type="EMBL" id="AL590708">
    <property type="status" value="NOT_ANNOTATED_CDS"/>
    <property type="molecule type" value="Genomic_DNA"/>
</dbReference>
<dbReference type="EMBL" id="CH471090">
    <property type="protein sequence ID" value="EAW87751.1"/>
    <property type="molecule type" value="Genomic_DNA"/>
</dbReference>
<dbReference type="EMBL" id="BC001857">
    <property type="protein sequence ID" value="AAH01857.1"/>
    <property type="molecule type" value="mRNA"/>
</dbReference>
<dbReference type="EMBL" id="BC008887">
    <property type="protein sequence ID" value="AAH08887.1"/>
    <property type="molecule type" value="mRNA"/>
</dbReference>
<dbReference type="EMBL" id="Y17450">
    <property type="protein sequence ID" value="CAB44344.1"/>
    <property type="molecule type" value="Genomic_DNA"/>
</dbReference>
<dbReference type="CCDS" id="CCDS6893.1"/>
<dbReference type="RefSeq" id="NP_077017.1">
    <property type="nucleotide sequence ID" value="NM_024112.4"/>
</dbReference>
<dbReference type="SMR" id="Q9BUW7"/>
<dbReference type="BioGRID" id="122542">
    <property type="interactions" value="47"/>
</dbReference>
<dbReference type="DIP" id="DIP-29481N"/>
<dbReference type="FunCoup" id="Q9BUW7">
    <property type="interactions" value="108"/>
</dbReference>
<dbReference type="IntAct" id="Q9BUW7">
    <property type="interactions" value="30"/>
</dbReference>
<dbReference type="STRING" id="9606.ENSP00000362085"/>
<dbReference type="GlyGen" id="Q9BUW7">
    <property type="glycosylation" value="1 site, 1 O-linked glycan (1 site)"/>
</dbReference>
<dbReference type="iPTMnet" id="Q9BUW7"/>
<dbReference type="PhosphoSitePlus" id="Q9BUW7"/>
<dbReference type="BioMuta" id="C9orf16"/>
<dbReference type="DMDM" id="20137930"/>
<dbReference type="jPOST" id="Q9BUW7"/>
<dbReference type="MassIVE" id="Q9BUW7"/>
<dbReference type="PaxDb" id="9606-ENSP00000362085"/>
<dbReference type="PeptideAtlas" id="Q9BUW7"/>
<dbReference type="ProteomicsDB" id="79140"/>
<dbReference type="Pumba" id="Q9BUW7"/>
<dbReference type="Antibodypedia" id="17364">
    <property type="antibodies" value="79 antibodies from 16 providers"/>
</dbReference>
<dbReference type="DNASU" id="79095"/>
<dbReference type="Ensembl" id="ENST00000372994.2">
    <property type="protein sequence ID" value="ENSP00000362085.1"/>
    <property type="gene ID" value="ENSG00000171159.5"/>
</dbReference>
<dbReference type="GeneID" id="79095"/>
<dbReference type="KEGG" id="hsa:79095"/>
<dbReference type="MANE-Select" id="ENST00000372994.2">
    <property type="protein sequence ID" value="ENSP00000362085.1"/>
    <property type="RefSeq nucleotide sequence ID" value="NM_024112.4"/>
    <property type="RefSeq protein sequence ID" value="NP_077017.1"/>
</dbReference>
<dbReference type="UCSC" id="uc004btp.1">
    <property type="organism name" value="human"/>
</dbReference>
<dbReference type="AGR" id="HGNC:17823"/>
<dbReference type="CTD" id="79095"/>
<dbReference type="DisGeNET" id="79095"/>
<dbReference type="GeneCards" id="BBLN"/>
<dbReference type="HGNC" id="HGNC:17823">
    <property type="gene designation" value="BBLN"/>
</dbReference>
<dbReference type="HPA" id="ENSG00000171159">
    <property type="expression patterns" value="Tissue enhanced (brain)"/>
</dbReference>
<dbReference type="neXtProt" id="NX_Q9BUW7"/>
<dbReference type="OpenTargets" id="ENSG00000171159"/>
<dbReference type="VEuPathDB" id="HostDB:ENSG00000171159"/>
<dbReference type="eggNOG" id="ENOG502SAFB">
    <property type="taxonomic scope" value="Eukaryota"/>
</dbReference>
<dbReference type="GeneTree" id="ENSGT00390000001761"/>
<dbReference type="HOGENOM" id="CLU_167244_0_0_1"/>
<dbReference type="InParanoid" id="Q9BUW7"/>
<dbReference type="OMA" id="INLMLDQ"/>
<dbReference type="OrthoDB" id="10050612at2759"/>
<dbReference type="PAN-GO" id="Q9BUW7">
    <property type="GO annotations" value="0 GO annotations based on evolutionary models"/>
</dbReference>
<dbReference type="PhylomeDB" id="Q9BUW7"/>
<dbReference type="TreeFam" id="TF324640"/>
<dbReference type="PathwayCommons" id="Q9BUW7"/>
<dbReference type="SignaLink" id="Q9BUW7"/>
<dbReference type="BioGRID-ORCS" id="79095">
    <property type="hits" value="63 hits in 1109 CRISPR screens"/>
</dbReference>
<dbReference type="GenomeRNAi" id="79095"/>
<dbReference type="Pharos" id="Q9BUW7">
    <property type="development level" value="Tdark"/>
</dbReference>
<dbReference type="PRO" id="PR:Q9BUW7"/>
<dbReference type="Proteomes" id="UP000005640">
    <property type="component" value="Chromosome 9"/>
</dbReference>
<dbReference type="RNAct" id="Q9BUW7">
    <property type="molecule type" value="protein"/>
</dbReference>
<dbReference type="Bgee" id="ENSG00000171159">
    <property type="expression patterns" value="Expressed in right adrenal gland cortex and 204 other cell types or tissues"/>
</dbReference>
<dbReference type="GO" id="GO:0070161">
    <property type="term" value="C:anchoring junction"/>
    <property type="evidence" value="ECO:0007669"/>
    <property type="project" value="UniProtKB-SubCell"/>
</dbReference>
<dbReference type="GO" id="GO:0030054">
    <property type="term" value="C:cell junction"/>
    <property type="evidence" value="ECO:0000315"/>
    <property type="project" value="UniProtKB"/>
</dbReference>
<dbReference type="GO" id="GO:0005737">
    <property type="term" value="C:cytoplasm"/>
    <property type="evidence" value="ECO:0007669"/>
    <property type="project" value="UniProtKB-KW"/>
</dbReference>
<dbReference type="GO" id="GO:0005882">
    <property type="term" value="C:intermediate filament"/>
    <property type="evidence" value="ECO:0007669"/>
    <property type="project" value="Ensembl"/>
</dbReference>
<dbReference type="GO" id="GO:0120219">
    <property type="term" value="C:subapical part of cell"/>
    <property type="evidence" value="ECO:0000315"/>
    <property type="project" value="UniProtKB"/>
</dbReference>
<dbReference type="GO" id="GO:0060090">
    <property type="term" value="F:molecular adaptor activity"/>
    <property type="evidence" value="ECO:0000315"/>
    <property type="project" value="UniProtKB"/>
</dbReference>
<dbReference type="GO" id="GO:0097190">
    <property type="term" value="P:apoptotic signaling pathway"/>
    <property type="evidence" value="ECO:0007669"/>
    <property type="project" value="Ensembl"/>
</dbReference>
<dbReference type="GO" id="GO:0060348">
    <property type="term" value="P:bone development"/>
    <property type="evidence" value="ECO:0007669"/>
    <property type="project" value="Ensembl"/>
</dbReference>
<dbReference type="GO" id="GO:0045453">
    <property type="term" value="P:bone resorption"/>
    <property type="evidence" value="ECO:0007669"/>
    <property type="project" value="Ensembl"/>
</dbReference>
<dbReference type="GO" id="GO:0010467">
    <property type="term" value="P:gene expression"/>
    <property type="evidence" value="ECO:0007669"/>
    <property type="project" value="Ensembl"/>
</dbReference>
<dbReference type="GO" id="GO:0045110">
    <property type="term" value="P:intermediate filament bundle assembly"/>
    <property type="evidence" value="ECO:0000315"/>
    <property type="project" value="UniProtKB"/>
</dbReference>
<dbReference type="GO" id="GO:0072674">
    <property type="term" value="P:multinuclear osteoclast differentiation"/>
    <property type="evidence" value="ECO:0007669"/>
    <property type="project" value="Ensembl"/>
</dbReference>
<dbReference type="InterPro" id="IPR005374">
    <property type="entry name" value="BBLN_eukaryota"/>
</dbReference>
<dbReference type="PANTHER" id="PTHR34344:SF1">
    <property type="entry name" value="BUBLIN COILED-COIL PROTEIN"/>
    <property type="match status" value="1"/>
</dbReference>
<dbReference type="PANTHER" id="PTHR34344">
    <property type="entry name" value="UPF0184 PROTEIN C9ORF16"/>
    <property type="match status" value="1"/>
</dbReference>
<dbReference type="Pfam" id="PF03670">
    <property type="entry name" value="UPF0184"/>
    <property type="match status" value="1"/>
</dbReference>
<evidence type="ECO:0000255" key="1"/>
<evidence type="ECO:0000256" key="2">
    <source>
        <dbReference type="SAM" id="MobiDB-lite"/>
    </source>
</evidence>
<evidence type="ECO:0000269" key="3">
    <source>
    </source>
</evidence>
<evidence type="ECO:0000305" key="4"/>
<evidence type="ECO:0000312" key="5">
    <source>
        <dbReference type="HGNC" id="HGNC:17823"/>
    </source>
</evidence>
<evidence type="ECO:0007744" key="6">
    <source>
    </source>
</evidence>
<evidence type="ECO:0007744" key="7">
    <source>
    </source>
</evidence>
<evidence type="ECO:0007744" key="8">
    <source>
    </source>
</evidence>
<evidence type="ECO:0007744" key="9">
    <source>
    </source>
</evidence>
<evidence type="ECO:0007744" key="10">
    <source>
    </source>
</evidence>
<comment type="function">
    <text evidence="3">Essential for intermediate filament organization in intestinal cells, interacts with intermediate filament and regulates intestinal lumen morphology.</text>
</comment>
<comment type="interaction">
    <interactant intactId="EBI-752084">
        <id>Q9BUW7</id>
    </interactant>
    <interactant intactId="EBI-21535880">
        <id>Q92870-2</id>
        <label>APBB2</label>
    </interactant>
    <organismsDiffer>false</organismsDiffer>
    <experiments>3</experiments>
</comment>
<comment type="interaction">
    <interactant intactId="EBI-752084">
        <id>Q9BUW7</id>
    </interactant>
    <interactant intactId="EBI-10253919">
        <id>Q6PJ05</id>
        <label>ATP6V1D</label>
    </interactant>
    <organismsDiffer>false</organismsDiffer>
    <experiments>5</experiments>
</comment>
<comment type="interaction">
    <interactant intactId="EBI-752084">
        <id>Q9BUW7</id>
    </interactant>
    <interactant intactId="EBI-2684998">
        <id>Q9Y5K8</id>
        <label>ATP6V1D</label>
    </interactant>
    <organismsDiffer>false</organismsDiffer>
    <experiments>9</experiments>
</comment>
<comment type="interaction">
    <interactant intactId="EBI-752084">
        <id>Q9BUW7</id>
    </interactant>
    <interactant intactId="EBI-8650380">
        <id>Q96A05</id>
        <label>ATP6V1E2</label>
    </interactant>
    <organismsDiffer>false</organismsDiffer>
    <experiments>3</experiments>
</comment>
<comment type="interaction">
    <interactant intactId="EBI-752084">
        <id>Q9BUW7</id>
    </interactant>
    <interactant intactId="EBI-1811944">
        <id>O15078</id>
        <label>CEP290</label>
    </interactant>
    <organismsDiffer>false</organismsDiffer>
    <experiments>6</experiments>
</comment>
<comment type="interaction">
    <interactant intactId="EBI-752084">
        <id>Q9BUW7</id>
    </interactant>
    <interactant intactId="EBI-12186431">
        <id>Q49A55</id>
        <label>FGD4</label>
    </interactant>
    <organismsDiffer>false</organismsDiffer>
    <experiments>3</experiments>
</comment>
<comment type="interaction">
    <interactant intactId="EBI-752084">
        <id>Q9BUW7</id>
    </interactant>
    <interactant intactId="EBI-466029">
        <id>P42858</id>
        <label>HTT</label>
    </interactant>
    <organismsDiffer>false</organismsDiffer>
    <experiments>6</experiments>
</comment>
<comment type="interaction">
    <interactant intactId="EBI-752084">
        <id>Q9BUW7</id>
    </interactant>
    <interactant intactId="EBI-2557212">
        <id>Q70UQ0</id>
        <label>IKBIP</label>
    </interactant>
    <organismsDiffer>false</organismsDiffer>
    <experiments>3</experiments>
</comment>
<comment type="interaction">
    <interactant intactId="EBI-752084">
        <id>Q9BUW7</id>
    </interactant>
    <interactant intactId="EBI-742094">
        <id>P35900</id>
        <label>KRT20</label>
    </interactant>
    <organismsDiffer>false</organismsDiffer>
    <experiments>9</experiments>
</comment>
<comment type="interaction">
    <interactant intactId="EBI-752084">
        <id>Q9BUW7</id>
    </interactant>
    <interactant intactId="EBI-752057">
        <id>Q7Z412</id>
        <label>PEX26</label>
    </interactant>
    <organismsDiffer>false</organismsDiffer>
    <experiments>3</experiments>
</comment>
<comment type="interaction">
    <interactant intactId="EBI-752084">
        <id>Q9BUW7</id>
    </interactant>
    <interactant intactId="EBI-50433196">
        <id>A0A6Q8PF08</id>
        <label>PMP22</label>
    </interactant>
    <organismsDiffer>false</organismsDiffer>
    <experiments>3</experiments>
</comment>
<comment type="subcellular location">
    <subcellularLocation>
        <location evidence="3">Cell junction</location>
    </subcellularLocation>
    <subcellularLocation>
        <location evidence="3">Cytoplasm</location>
        <location evidence="3">Cytoskeleton</location>
    </subcellularLocation>
    <text evidence="3">In the intestine, localizes subapically and at cell junctions. Interacts with intermediate filament (IF) proteins and localizes to the IF network in an IF-dependent manner (PubMed:33857431). In dividing cells, localizes to interpolar and kinetochore microtubules (PubMed:33857431).</text>
</comment>
<comment type="similarity">
    <text evidence="4">Belongs to the UPF0184 (EST00098) family.</text>
</comment>
<gene>
    <name evidence="5" type="primary">BBLN</name>
    <name type="synonym">C9orf16</name>
    <name type="ORF">EST00098</name>
</gene>